<proteinExistence type="inferred from homology"/>
<organism>
    <name type="scientific">Brucella canis (strain ATCC 23365 / NCTC 10854 / RM-666)</name>
    <dbReference type="NCBI Taxonomy" id="483179"/>
    <lineage>
        <taxon>Bacteria</taxon>
        <taxon>Pseudomonadati</taxon>
        <taxon>Pseudomonadota</taxon>
        <taxon>Alphaproteobacteria</taxon>
        <taxon>Hyphomicrobiales</taxon>
        <taxon>Brucellaceae</taxon>
        <taxon>Brucella/Ochrobactrum group</taxon>
        <taxon>Brucella</taxon>
    </lineage>
</organism>
<comment type="function">
    <text evidence="1">Catalyzes the conversion of acetate into acetyl-CoA (AcCoA), an essential intermediate at the junction of anabolic and catabolic pathways. AcsA undergoes a two-step reaction. In the first half reaction, AcsA combines acetate with ATP to form acetyl-adenylate (AcAMP) intermediate. In the second half reaction, it can then transfer the acetyl group from AcAMP to the sulfhydryl group of CoA, forming the product AcCoA.</text>
</comment>
<comment type="catalytic activity">
    <reaction evidence="1">
        <text>acetate + ATP + CoA = acetyl-CoA + AMP + diphosphate</text>
        <dbReference type="Rhea" id="RHEA:23176"/>
        <dbReference type="ChEBI" id="CHEBI:30089"/>
        <dbReference type="ChEBI" id="CHEBI:30616"/>
        <dbReference type="ChEBI" id="CHEBI:33019"/>
        <dbReference type="ChEBI" id="CHEBI:57287"/>
        <dbReference type="ChEBI" id="CHEBI:57288"/>
        <dbReference type="ChEBI" id="CHEBI:456215"/>
        <dbReference type="EC" id="6.2.1.1"/>
    </reaction>
</comment>
<comment type="cofactor">
    <cofactor evidence="1">
        <name>Mg(2+)</name>
        <dbReference type="ChEBI" id="CHEBI:18420"/>
    </cofactor>
</comment>
<comment type="PTM">
    <text evidence="1">Acetylated. Deacetylation by the SIR2-homolog deacetylase activates the enzyme.</text>
</comment>
<comment type="similarity">
    <text evidence="1">Belongs to the ATP-dependent AMP-binding enzyme family.</text>
</comment>
<gene>
    <name evidence="1" type="primary">acsA</name>
    <name type="ordered locus">BCAN_A1849</name>
</gene>
<name>ACSA_BRUC2</name>
<evidence type="ECO:0000255" key="1">
    <source>
        <dbReference type="HAMAP-Rule" id="MF_01123"/>
    </source>
</evidence>
<dbReference type="EC" id="6.2.1.1" evidence="1"/>
<dbReference type="EMBL" id="CP000872">
    <property type="protein sequence ID" value="ABX62847.1"/>
    <property type="molecule type" value="Genomic_DNA"/>
</dbReference>
<dbReference type="SMR" id="A9M849"/>
<dbReference type="KEGG" id="bcs:BCAN_A1849"/>
<dbReference type="HOGENOM" id="CLU_000022_3_6_5"/>
<dbReference type="Proteomes" id="UP000001385">
    <property type="component" value="Chromosome I"/>
</dbReference>
<dbReference type="GO" id="GO:0005829">
    <property type="term" value="C:cytosol"/>
    <property type="evidence" value="ECO:0007669"/>
    <property type="project" value="TreeGrafter"/>
</dbReference>
<dbReference type="GO" id="GO:0003987">
    <property type="term" value="F:acetate-CoA ligase activity"/>
    <property type="evidence" value="ECO:0007669"/>
    <property type="project" value="UniProtKB-UniRule"/>
</dbReference>
<dbReference type="GO" id="GO:0016208">
    <property type="term" value="F:AMP binding"/>
    <property type="evidence" value="ECO:0007669"/>
    <property type="project" value="InterPro"/>
</dbReference>
<dbReference type="GO" id="GO:0005524">
    <property type="term" value="F:ATP binding"/>
    <property type="evidence" value="ECO:0007669"/>
    <property type="project" value="UniProtKB-KW"/>
</dbReference>
<dbReference type="GO" id="GO:0046872">
    <property type="term" value="F:metal ion binding"/>
    <property type="evidence" value="ECO:0007669"/>
    <property type="project" value="UniProtKB-KW"/>
</dbReference>
<dbReference type="GO" id="GO:0019427">
    <property type="term" value="P:acetyl-CoA biosynthetic process from acetate"/>
    <property type="evidence" value="ECO:0007669"/>
    <property type="project" value="InterPro"/>
</dbReference>
<dbReference type="CDD" id="cd05966">
    <property type="entry name" value="ACS"/>
    <property type="match status" value="1"/>
</dbReference>
<dbReference type="FunFam" id="3.30.300.30:FF:000004">
    <property type="entry name" value="Acetyl-coenzyme A synthetase"/>
    <property type="match status" value="1"/>
</dbReference>
<dbReference type="FunFam" id="3.40.50.12780:FF:000001">
    <property type="entry name" value="Acetyl-coenzyme A synthetase"/>
    <property type="match status" value="1"/>
</dbReference>
<dbReference type="Gene3D" id="3.30.300.30">
    <property type="match status" value="1"/>
</dbReference>
<dbReference type="Gene3D" id="3.40.50.12780">
    <property type="entry name" value="N-terminal domain of ligase-like"/>
    <property type="match status" value="1"/>
</dbReference>
<dbReference type="HAMAP" id="MF_01123">
    <property type="entry name" value="Ac_CoA_synth"/>
    <property type="match status" value="1"/>
</dbReference>
<dbReference type="InterPro" id="IPR011904">
    <property type="entry name" value="Ac_CoA_lig"/>
</dbReference>
<dbReference type="InterPro" id="IPR032387">
    <property type="entry name" value="ACAS_N"/>
</dbReference>
<dbReference type="InterPro" id="IPR025110">
    <property type="entry name" value="AMP-bd_C"/>
</dbReference>
<dbReference type="InterPro" id="IPR045851">
    <property type="entry name" value="AMP-bd_C_sf"/>
</dbReference>
<dbReference type="InterPro" id="IPR020845">
    <property type="entry name" value="AMP-binding_CS"/>
</dbReference>
<dbReference type="InterPro" id="IPR000873">
    <property type="entry name" value="AMP-dep_synth/lig_dom"/>
</dbReference>
<dbReference type="InterPro" id="IPR042099">
    <property type="entry name" value="ANL_N_sf"/>
</dbReference>
<dbReference type="NCBIfam" id="TIGR02188">
    <property type="entry name" value="Ac_CoA_lig_AcsA"/>
    <property type="match status" value="1"/>
</dbReference>
<dbReference type="NCBIfam" id="NF001208">
    <property type="entry name" value="PRK00174.1"/>
    <property type="match status" value="1"/>
</dbReference>
<dbReference type="PANTHER" id="PTHR24095">
    <property type="entry name" value="ACETYL-COENZYME A SYNTHETASE"/>
    <property type="match status" value="1"/>
</dbReference>
<dbReference type="PANTHER" id="PTHR24095:SF14">
    <property type="entry name" value="ACETYL-COENZYME A SYNTHETASE 1"/>
    <property type="match status" value="1"/>
</dbReference>
<dbReference type="Pfam" id="PF16177">
    <property type="entry name" value="ACAS_N"/>
    <property type="match status" value="1"/>
</dbReference>
<dbReference type="Pfam" id="PF00501">
    <property type="entry name" value="AMP-binding"/>
    <property type="match status" value="1"/>
</dbReference>
<dbReference type="Pfam" id="PF13193">
    <property type="entry name" value="AMP-binding_C"/>
    <property type="match status" value="1"/>
</dbReference>
<dbReference type="SUPFAM" id="SSF56801">
    <property type="entry name" value="Acetyl-CoA synthetase-like"/>
    <property type="match status" value="1"/>
</dbReference>
<dbReference type="PROSITE" id="PS00455">
    <property type="entry name" value="AMP_BINDING"/>
    <property type="match status" value="1"/>
</dbReference>
<protein>
    <recommendedName>
        <fullName evidence="1">Acetyl-coenzyme A synthetase</fullName>
        <shortName evidence="1">AcCoA synthetase</shortName>
        <shortName evidence="1">Acs</shortName>
        <ecNumber evidence="1">6.2.1.1</ecNumber>
    </recommendedName>
    <alternativeName>
        <fullName evidence="1">Acetate--CoA ligase</fullName>
    </alternativeName>
    <alternativeName>
        <fullName evidence="1">Acyl-activating enzyme</fullName>
    </alternativeName>
</protein>
<accession>A9M849</accession>
<keyword id="KW-0007">Acetylation</keyword>
<keyword id="KW-0067">ATP-binding</keyword>
<keyword id="KW-0436">Ligase</keyword>
<keyword id="KW-0460">Magnesium</keyword>
<keyword id="KW-0479">Metal-binding</keyword>
<keyword id="KW-0547">Nucleotide-binding</keyword>
<keyword id="KW-1185">Reference proteome</keyword>
<reference key="1">
    <citation type="submission" date="2007-10" db="EMBL/GenBank/DDBJ databases">
        <title>Brucella canis ATCC 23365 whole genome shotgun sequencing project.</title>
        <authorList>
            <person name="Setubal J.C."/>
            <person name="Bowns C."/>
            <person name="Boyle S."/>
            <person name="Crasta O.R."/>
            <person name="Czar M.J."/>
            <person name="Dharmanolla C."/>
            <person name="Gillespie J.J."/>
            <person name="Kenyon R.W."/>
            <person name="Lu J."/>
            <person name="Mane S."/>
            <person name="Mohapatra S."/>
            <person name="Nagrani S."/>
            <person name="Purkayastha A."/>
            <person name="Rajasimha H.K."/>
            <person name="Shallom J.M."/>
            <person name="Shallom S."/>
            <person name="Shukla M."/>
            <person name="Snyder E.E."/>
            <person name="Sobral B.W."/>
            <person name="Wattam A.R."/>
            <person name="Will R."/>
            <person name="Williams K."/>
            <person name="Yoo H."/>
            <person name="Bruce D."/>
            <person name="Detter C."/>
            <person name="Munk C."/>
            <person name="Brettin T.S."/>
        </authorList>
    </citation>
    <scope>NUCLEOTIDE SEQUENCE [LARGE SCALE GENOMIC DNA]</scope>
    <source>
        <strain>ATCC 23365 / NCTC 10854 / RM-666</strain>
    </source>
</reference>
<feature type="chain" id="PRO_1000084999" description="Acetyl-coenzyme A synthetase">
    <location>
        <begin position="1"/>
        <end position="651"/>
    </location>
</feature>
<feature type="binding site" evidence="1">
    <location>
        <begin position="189"/>
        <end position="192"/>
    </location>
    <ligand>
        <name>CoA</name>
        <dbReference type="ChEBI" id="CHEBI:57287"/>
    </ligand>
</feature>
<feature type="binding site" evidence="1">
    <location>
        <position position="311"/>
    </location>
    <ligand>
        <name>CoA</name>
        <dbReference type="ChEBI" id="CHEBI:57287"/>
    </ligand>
</feature>
<feature type="binding site" evidence="1">
    <location>
        <position position="335"/>
    </location>
    <ligand>
        <name>CoA</name>
        <dbReference type="ChEBI" id="CHEBI:57287"/>
    </ligand>
</feature>
<feature type="binding site" evidence="1">
    <location>
        <begin position="387"/>
        <end position="389"/>
    </location>
    <ligand>
        <name>ATP</name>
        <dbReference type="ChEBI" id="CHEBI:30616"/>
    </ligand>
</feature>
<feature type="binding site" evidence="1">
    <location>
        <begin position="411"/>
        <end position="416"/>
    </location>
    <ligand>
        <name>ATP</name>
        <dbReference type="ChEBI" id="CHEBI:30616"/>
    </ligand>
</feature>
<feature type="binding site" evidence="1">
    <location>
        <position position="500"/>
    </location>
    <ligand>
        <name>ATP</name>
        <dbReference type="ChEBI" id="CHEBI:30616"/>
    </ligand>
</feature>
<feature type="binding site" evidence="1">
    <location>
        <position position="515"/>
    </location>
    <ligand>
        <name>ATP</name>
        <dbReference type="ChEBI" id="CHEBI:30616"/>
    </ligand>
</feature>
<feature type="binding site" evidence="1">
    <location>
        <position position="523"/>
    </location>
    <ligand>
        <name>CoA</name>
        <dbReference type="ChEBI" id="CHEBI:57287"/>
    </ligand>
</feature>
<feature type="binding site" evidence="1">
    <location>
        <position position="526"/>
    </location>
    <ligand>
        <name>ATP</name>
        <dbReference type="ChEBI" id="CHEBI:30616"/>
    </ligand>
</feature>
<feature type="binding site" evidence="1">
    <location>
        <position position="537"/>
    </location>
    <ligand>
        <name>Mg(2+)</name>
        <dbReference type="ChEBI" id="CHEBI:18420"/>
    </ligand>
</feature>
<feature type="binding site" evidence="1">
    <location>
        <position position="539"/>
    </location>
    <ligand>
        <name>Mg(2+)</name>
        <dbReference type="ChEBI" id="CHEBI:18420"/>
    </ligand>
</feature>
<feature type="binding site" evidence="1">
    <location>
        <position position="542"/>
    </location>
    <ligand>
        <name>Mg(2+)</name>
        <dbReference type="ChEBI" id="CHEBI:18420"/>
    </ligand>
</feature>
<feature type="binding site">
    <location>
        <position position="586"/>
    </location>
    <ligand>
        <name>CoA</name>
        <dbReference type="ChEBI" id="CHEBI:57287"/>
    </ligand>
</feature>
<feature type="modified residue" description="N6-acetyllysine" evidence="1">
    <location>
        <position position="611"/>
    </location>
</feature>
<sequence length="651" mass="72731">MSEKLYPVLPEAKKNTLIDNETYLEWYEESVSDPDGFWAKHGRRIDWFKPFTKVKNTDFNGDVTIKWYEDGVTNVSYNCIDRHLKSRGDKVAIIWEGDNPYIDKKITYRELYENVCRMANVLKKHGVKKGDRVTIYLPMIPEAAYAMLACARIGAVHSVVFAGFSPEALAGRIVDCESTFVITADEGVRGGKPVALKENTDTAIDIAAKQYVMVNKVLVVRRTGGKVSWGRGRDLWYHQEVASVEPHCEPEPMNAEDPLFILYTSGSTGKPKGVLHTTGGYLVYASMTHQYVFDYHDGEIYWCTADVGWVTGHSYIVYGPLANGATTLMFEGVPNFPDQGRFWEVVDKHHVNIFYTAPTALRALMGAGDEFVTRSSRSTLRLLGSVGEPINPEAWEWYYNVVGDQKCPIVDTWWQTENGGILITPLPGATDLKPGSATRPFFGVKPVLVDNEGNVQEGVADGNLCISDSWPGQMRTVYGDHKRFIETYFSTYKGMYFSGDGCRRDEDGYYWITGRVDDVLNISGHRLGTAEIESALVSHHSVSEAAVVGYPHPIKGQGIYCYVTLMTGADAQDPDELRKELVQHVRKEIGPIATPDKIQFAPGLPKTRSGKIMRRILRKIAEDEFGALGDTSTLADPGVVDDLIENRQNKK</sequence>